<gene>
    <name type="primary">acyP</name>
    <name type="ordered locus">Pcal_0787</name>
</gene>
<feature type="chain" id="PRO_0000326867" description="Acylphosphatase">
    <location>
        <begin position="1"/>
        <end position="110"/>
    </location>
</feature>
<feature type="domain" description="Acylphosphatase-like" evidence="1">
    <location>
        <begin position="20"/>
        <end position="108"/>
    </location>
</feature>
<feature type="active site" evidence="1">
    <location>
        <position position="35"/>
    </location>
</feature>
<feature type="active site" evidence="1">
    <location>
        <position position="53"/>
    </location>
</feature>
<comment type="catalytic activity">
    <reaction>
        <text>an acyl phosphate + H2O = a carboxylate + phosphate + H(+)</text>
        <dbReference type="Rhea" id="RHEA:14965"/>
        <dbReference type="ChEBI" id="CHEBI:15377"/>
        <dbReference type="ChEBI" id="CHEBI:15378"/>
        <dbReference type="ChEBI" id="CHEBI:29067"/>
        <dbReference type="ChEBI" id="CHEBI:43474"/>
        <dbReference type="ChEBI" id="CHEBI:59918"/>
        <dbReference type="EC" id="3.6.1.7"/>
    </reaction>
</comment>
<comment type="similarity">
    <text evidence="2">Belongs to the acylphosphatase family.</text>
</comment>
<accession>A3MU96</accession>
<keyword id="KW-0378">Hydrolase</keyword>
<name>ACYP_PYRCJ</name>
<dbReference type="EC" id="3.6.1.7"/>
<dbReference type="EMBL" id="CP000561">
    <property type="protein sequence ID" value="ABO08213.1"/>
    <property type="molecule type" value="Genomic_DNA"/>
</dbReference>
<dbReference type="SMR" id="A3MU96"/>
<dbReference type="STRING" id="410359.Pcal_0787"/>
<dbReference type="KEGG" id="pcl:Pcal_0787"/>
<dbReference type="eggNOG" id="arCOG01674">
    <property type="taxonomic scope" value="Archaea"/>
</dbReference>
<dbReference type="HOGENOM" id="CLU_141932_3_1_2"/>
<dbReference type="Proteomes" id="UP000001431">
    <property type="component" value="Chromosome"/>
</dbReference>
<dbReference type="GO" id="GO:0003998">
    <property type="term" value="F:acylphosphatase activity"/>
    <property type="evidence" value="ECO:0007669"/>
    <property type="project" value="UniProtKB-EC"/>
</dbReference>
<dbReference type="Gene3D" id="3.30.70.100">
    <property type="match status" value="1"/>
</dbReference>
<dbReference type="InterPro" id="IPR020456">
    <property type="entry name" value="Acylphosphatase"/>
</dbReference>
<dbReference type="InterPro" id="IPR001792">
    <property type="entry name" value="Acylphosphatase-like_dom"/>
</dbReference>
<dbReference type="InterPro" id="IPR036046">
    <property type="entry name" value="Acylphosphatase-like_dom_sf"/>
</dbReference>
<dbReference type="InterPro" id="IPR017968">
    <property type="entry name" value="Acylphosphatase_CS"/>
</dbReference>
<dbReference type="PANTHER" id="PTHR47268">
    <property type="entry name" value="ACYLPHOSPHATASE"/>
    <property type="match status" value="1"/>
</dbReference>
<dbReference type="PANTHER" id="PTHR47268:SF4">
    <property type="entry name" value="ACYLPHOSPHATASE"/>
    <property type="match status" value="1"/>
</dbReference>
<dbReference type="Pfam" id="PF00708">
    <property type="entry name" value="Acylphosphatase"/>
    <property type="match status" value="1"/>
</dbReference>
<dbReference type="SUPFAM" id="SSF54975">
    <property type="entry name" value="Acylphosphatase/BLUF domain-like"/>
    <property type="match status" value="1"/>
</dbReference>
<dbReference type="PROSITE" id="PS00150">
    <property type="entry name" value="ACYLPHOSPHATASE_1"/>
    <property type="match status" value="1"/>
</dbReference>
<dbReference type="PROSITE" id="PS51160">
    <property type="entry name" value="ACYLPHOSPHATASE_3"/>
    <property type="match status" value="1"/>
</dbReference>
<proteinExistence type="inferred from homology"/>
<evidence type="ECO:0000255" key="1">
    <source>
        <dbReference type="PROSITE-ProRule" id="PRU00520"/>
    </source>
</evidence>
<evidence type="ECO:0000305" key="2"/>
<sequence length="110" mass="12674">MGQPLKVKKRIYSQDVELVRAHIFVRGKVQGVFFRQSMKDVANKYGVKGWVRNRRDGRTVEAVLEGPKDAVLKVIEWARVGPPGARVEDLEVKWEEYKGEFNDFSILPTE</sequence>
<protein>
    <recommendedName>
        <fullName>Acylphosphatase</fullName>
        <ecNumber>3.6.1.7</ecNumber>
    </recommendedName>
    <alternativeName>
        <fullName>Acylphosphate phosphohydrolase</fullName>
    </alternativeName>
</protein>
<reference key="1">
    <citation type="submission" date="2007-02" db="EMBL/GenBank/DDBJ databases">
        <title>Complete sequence of Pyrobaculum calidifontis JCM 11548.</title>
        <authorList>
            <consortium name="US DOE Joint Genome Institute"/>
            <person name="Copeland A."/>
            <person name="Lucas S."/>
            <person name="Lapidus A."/>
            <person name="Barry K."/>
            <person name="Glavina del Rio T."/>
            <person name="Dalin E."/>
            <person name="Tice H."/>
            <person name="Pitluck S."/>
            <person name="Chain P."/>
            <person name="Malfatti S."/>
            <person name="Shin M."/>
            <person name="Vergez L."/>
            <person name="Schmutz J."/>
            <person name="Larimer F."/>
            <person name="Land M."/>
            <person name="Hauser L."/>
            <person name="Kyrpides N."/>
            <person name="Mikhailova N."/>
            <person name="Cozen A.E."/>
            <person name="Fitz-Gibbon S.T."/>
            <person name="House C.H."/>
            <person name="Saltikov C."/>
            <person name="Lowe T.M."/>
            <person name="Richardson P."/>
        </authorList>
    </citation>
    <scope>NUCLEOTIDE SEQUENCE [LARGE SCALE GENOMIC DNA]</scope>
    <source>
        <strain>DSM 21063 / JCM 11548 / VA1</strain>
    </source>
</reference>
<organism>
    <name type="scientific">Pyrobaculum calidifontis (strain DSM 21063 / JCM 11548 / VA1)</name>
    <dbReference type="NCBI Taxonomy" id="410359"/>
    <lineage>
        <taxon>Archaea</taxon>
        <taxon>Thermoproteota</taxon>
        <taxon>Thermoprotei</taxon>
        <taxon>Thermoproteales</taxon>
        <taxon>Thermoproteaceae</taxon>
        <taxon>Pyrobaculum</taxon>
    </lineage>
</organism>